<protein>
    <recommendedName>
        <fullName>Probable fructose-bisphosphate aldolase class 1</fullName>
        <ecNumber>4.1.2.13</ecNumber>
    </recommendedName>
    <alternativeName>
        <fullName>Fructose-bisphosphate aldolase class I</fullName>
        <shortName>FBP aldolase</shortName>
    </alternativeName>
</protein>
<gene>
    <name type="ordered locus">XF_0826</name>
</gene>
<keyword id="KW-0324">Glycolysis</keyword>
<keyword id="KW-0456">Lyase</keyword>
<organism>
    <name type="scientific">Xylella fastidiosa (strain 9a5c)</name>
    <dbReference type="NCBI Taxonomy" id="160492"/>
    <lineage>
        <taxon>Bacteria</taxon>
        <taxon>Pseudomonadati</taxon>
        <taxon>Pseudomonadota</taxon>
        <taxon>Gammaproteobacteria</taxon>
        <taxon>Lysobacterales</taxon>
        <taxon>Lysobacteraceae</taxon>
        <taxon>Xylella</taxon>
    </lineage>
</organism>
<reference key="1">
    <citation type="journal article" date="2000" name="Nature">
        <title>The genome sequence of the plant pathogen Xylella fastidiosa.</title>
        <authorList>
            <person name="Simpson A.J.G."/>
            <person name="Reinach F.C."/>
            <person name="Arruda P."/>
            <person name="Abreu F.A."/>
            <person name="Acencio M."/>
            <person name="Alvarenga R."/>
            <person name="Alves L.M.C."/>
            <person name="Araya J.E."/>
            <person name="Baia G.S."/>
            <person name="Baptista C.S."/>
            <person name="Barros M.H."/>
            <person name="Bonaccorsi E.D."/>
            <person name="Bordin S."/>
            <person name="Bove J.M."/>
            <person name="Briones M.R.S."/>
            <person name="Bueno M.R.P."/>
            <person name="Camargo A.A."/>
            <person name="Camargo L.E.A."/>
            <person name="Carraro D.M."/>
            <person name="Carrer H."/>
            <person name="Colauto N.B."/>
            <person name="Colombo C."/>
            <person name="Costa F.F."/>
            <person name="Costa M.C.R."/>
            <person name="Costa-Neto C.M."/>
            <person name="Coutinho L.L."/>
            <person name="Cristofani M."/>
            <person name="Dias-Neto E."/>
            <person name="Docena C."/>
            <person name="El-Dorry H."/>
            <person name="Facincani A.P."/>
            <person name="Ferreira A.J.S."/>
            <person name="Ferreira V.C.A."/>
            <person name="Ferro J.A."/>
            <person name="Fraga J.S."/>
            <person name="Franca S.C."/>
            <person name="Franco M.C."/>
            <person name="Frohme M."/>
            <person name="Furlan L.R."/>
            <person name="Garnier M."/>
            <person name="Goldman G.H."/>
            <person name="Goldman M.H.S."/>
            <person name="Gomes S.L."/>
            <person name="Gruber A."/>
            <person name="Ho P.L."/>
            <person name="Hoheisel J.D."/>
            <person name="Junqueira M.L."/>
            <person name="Kemper E.L."/>
            <person name="Kitajima J.P."/>
            <person name="Krieger J.E."/>
            <person name="Kuramae E.E."/>
            <person name="Laigret F."/>
            <person name="Lambais M.R."/>
            <person name="Leite L.C.C."/>
            <person name="Lemos E.G.M."/>
            <person name="Lemos M.V.F."/>
            <person name="Lopes S.A."/>
            <person name="Lopes C.R."/>
            <person name="Machado J.A."/>
            <person name="Machado M.A."/>
            <person name="Madeira A.M.B.N."/>
            <person name="Madeira H.M.F."/>
            <person name="Marino C.L."/>
            <person name="Marques M.V."/>
            <person name="Martins E.A.L."/>
            <person name="Martins E.M.F."/>
            <person name="Matsukuma A.Y."/>
            <person name="Menck C.F.M."/>
            <person name="Miracca E.C."/>
            <person name="Miyaki C.Y."/>
            <person name="Monteiro-Vitorello C.B."/>
            <person name="Moon D.H."/>
            <person name="Nagai M.A."/>
            <person name="Nascimento A.L.T.O."/>
            <person name="Netto L.E.S."/>
            <person name="Nhani A. Jr."/>
            <person name="Nobrega F.G."/>
            <person name="Nunes L.R."/>
            <person name="Oliveira M.A."/>
            <person name="de Oliveira M.C."/>
            <person name="de Oliveira R.C."/>
            <person name="Palmieri D.A."/>
            <person name="Paris A."/>
            <person name="Peixoto B.R."/>
            <person name="Pereira G.A.G."/>
            <person name="Pereira H.A. Jr."/>
            <person name="Pesquero J.B."/>
            <person name="Quaggio R.B."/>
            <person name="Roberto P.G."/>
            <person name="Rodrigues V."/>
            <person name="de Rosa A.J.M."/>
            <person name="de Rosa V.E. Jr."/>
            <person name="de Sa R.G."/>
            <person name="Santelli R.V."/>
            <person name="Sawasaki H.E."/>
            <person name="da Silva A.C.R."/>
            <person name="da Silva A.M."/>
            <person name="da Silva F.R."/>
            <person name="Silva W.A. Jr."/>
            <person name="da Silveira J.F."/>
            <person name="Silvestri M.L.Z."/>
            <person name="Siqueira W.J."/>
            <person name="de Souza A.A."/>
            <person name="de Souza A.P."/>
            <person name="Terenzi M.F."/>
            <person name="Truffi D."/>
            <person name="Tsai S.M."/>
            <person name="Tsuhako M.H."/>
            <person name="Vallada H."/>
            <person name="Van Sluys M.A."/>
            <person name="Verjovski-Almeida S."/>
            <person name="Vettore A.L."/>
            <person name="Zago M.A."/>
            <person name="Zatz M."/>
            <person name="Meidanis J."/>
            <person name="Setubal J.C."/>
        </authorList>
    </citation>
    <scope>NUCLEOTIDE SEQUENCE [LARGE SCALE GENOMIC DNA]</scope>
    <source>
        <strain>9a5c</strain>
    </source>
</reference>
<dbReference type="EC" id="4.1.2.13"/>
<dbReference type="EMBL" id="AE003849">
    <property type="protein sequence ID" value="AAF83636.1"/>
    <property type="molecule type" value="Genomic_DNA"/>
</dbReference>
<dbReference type="PIR" id="G82757">
    <property type="entry name" value="G82757"/>
</dbReference>
<dbReference type="RefSeq" id="WP_010893346.1">
    <property type="nucleotide sequence ID" value="NC_002488.3"/>
</dbReference>
<dbReference type="SMR" id="Q9PF52"/>
<dbReference type="STRING" id="160492.XF_0826"/>
<dbReference type="KEGG" id="xfa:XF_0826"/>
<dbReference type="eggNOG" id="COG3588">
    <property type="taxonomic scope" value="Bacteria"/>
</dbReference>
<dbReference type="HOGENOM" id="CLU_031243_0_0_6"/>
<dbReference type="UniPathway" id="UPA00109">
    <property type="reaction ID" value="UER00183"/>
</dbReference>
<dbReference type="Proteomes" id="UP000000812">
    <property type="component" value="Chromosome"/>
</dbReference>
<dbReference type="GO" id="GO:0004332">
    <property type="term" value="F:fructose-bisphosphate aldolase activity"/>
    <property type="evidence" value="ECO:0007669"/>
    <property type="project" value="UniProtKB-EC"/>
</dbReference>
<dbReference type="GO" id="GO:0006096">
    <property type="term" value="P:glycolytic process"/>
    <property type="evidence" value="ECO:0007669"/>
    <property type="project" value="UniProtKB-UniPathway"/>
</dbReference>
<dbReference type="CDD" id="cd00948">
    <property type="entry name" value="FBP_aldolase_I_a"/>
    <property type="match status" value="1"/>
</dbReference>
<dbReference type="FunFam" id="3.20.20.70:FF:000140">
    <property type="entry name" value="Fructose-bisphosphate aldolase"/>
    <property type="match status" value="1"/>
</dbReference>
<dbReference type="Gene3D" id="3.20.20.70">
    <property type="entry name" value="Aldolase class I"/>
    <property type="match status" value="1"/>
</dbReference>
<dbReference type="InterPro" id="IPR029768">
    <property type="entry name" value="Aldolase_I_AS"/>
</dbReference>
<dbReference type="InterPro" id="IPR013785">
    <property type="entry name" value="Aldolase_TIM"/>
</dbReference>
<dbReference type="InterPro" id="IPR000741">
    <property type="entry name" value="FBA_I"/>
</dbReference>
<dbReference type="NCBIfam" id="NF033379">
    <property type="entry name" value="FrucBisAld_I"/>
    <property type="match status" value="1"/>
</dbReference>
<dbReference type="PANTHER" id="PTHR11627">
    <property type="entry name" value="FRUCTOSE-BISPHOSPHATE ALDOLASE"/>
    <property type="match status" value="1"/>
</dbReference>
<dbReference type="Pfam" id="PF00274">
    <property type="entry name" value="Glycolytic"/>
    <property type="match status" value="1"/>
</dbReference>
<dbReference type="SUPFAM" id="SSF51569">
    <property type="entry name" value="Aldolase"/>
    <property type="match status" value="1"/>
</dbReference>
<dbReference type="PROSITE" id="PS00158">
    <property type="entry name" value="ALDOLASE_CLASS_I"/>
    <property type="match status" value="1"/>
</dbReference>
<comment type="catalytic activity">
    <reaction>
        <text>beta-D-fructose 1,6-bisphosphate = D-glyceraldehyde 3-phosphate + dihydroxyacetone phosphate</text>
        <dbReference type="Rhea" id="RHEA:14729"/>
        <dbReference type="ChEBI" id="CHEBI:32966"/>
        <dbReference type="ChEBI" id="CHEBI:57642"/>
        <dbReference type="ChEBI" id="CHEBI:59776"/>
        <dbReference type="EC" id="4.1.2.13"/>
    </reaction>
</comment>
<comment type="pathway">
    <text>Carbohydrate degradation; glycolysis; D-glyceraldehyde 3-phosphate and glycerone phosphate from D-glucose: step 4/4.</text>
</comment>
<comment type="similarity">
    <text evidence="1">Belongs to the class I fructose-bisphosphate aldolase family.</text>
</comment>
<proteinExistence type="inferred from homology"/>
<accession>Q9PF52</accession>
<sequence>MSIEQLAETAQAMVASGKGIIAIDESAGTIAKRFSSVGIENIEENRRAYRELLLTTPKLSDYISGAILFDETIRQSTKAGVPFPKYMADHGIIPGIKVDKGAYPLAGCPGELVTEGLDGLRARLEEYYKLGARFAKWRAVINIGDDIPSGMCIDANVHALARYAALCQEQGLVPMVEPEVIMDGNHDISAAYEVTEATLRSLFNALYEQNVVLEGTILKASMVIPGTDCEEQASIDEVAESTVMCLKSTVPAILPGIVFLSGGQTDAQSTAHLNAMNQLDPLPWPLSFSYGRAMQQAALKLWSQDMKGNFAKAQQVVYERAKENGLAALGKWKG</sequence>
<name>ALF1_XYLFA</name>
<evidence type="ECO:0000305" key="1"/>
<feature type="chain" id="PRO_0000216917" description="Probable fructose-bisphosphate aldolase class 1">
    <location>
        <begin position="1"/>
        <end position="334"/>
    </location>
</feature>